<accession>B1XBG0</accession>
<protein>
    <recommendedName>
        <fullName evidence="1">Carnitine operon protein CaiE</fullName>
    </recommendedName>
</protein>
<name>CAIE_ECODH</name>
<dbReference type="EMBL" id="CP000948">
    <property type="protein sequence ID" value="ACB01240.1"/>
    <property type="molecule type" value="Genomic_DNA"/>
</dbReference>
<dbReference type="RefSeq" id="WP_000122871.1">
    <property type="nucleotide sequence ID" value="NC_010473.1"/>
</dbReference>
<dbReference type="SMR" id="B1XBG0"/>
<dbReference type="KEGG" id="ecd:ECDH10B_0036"/>
<dbReference type="HOGENOM" id="CLU_064827_4_2_6"/>
<dbReference type="UniPathway" id="UPA00117"/>
<dbReference type="GO" id="GO:0016740">
    <property type="term" value="F:transferase activity"/>
    <property type="evidence" value="ECO:0007669"/>
    <property type="project" value="UniProtKB-KW"/>
</dbReference>
<dbReference type="GO" id="GO:0009437">
    <property type="term" value="P:carnitine metabolic process"/>
    <property type="evidence" value="ECO:0007669"/>
    <property type="project" value="UniProtKB-UniRule"/>
</dbReference>
<dbReference type="CDD" id="cd04745">
    <property type="entry name" value="LbH_paaY_like"/>
    <property type="match status" value="1"/>
</dbReference>
<dbReference type="FunFam" id="2.160.10.10:FF:000012">
    <property type="entry name" value="Carnitine operon protein CaiE"/>
    <property type="match status" value="1"/>
</dbReference>
<dbReference type="Gene3D" id="2.160.10.10">
    <property type="entry name" value="Hexapeptide repeat proteins"/>
    <property type="match status" value="1"/>
</dbReference>
<dbReference type="HAMAP" id="MF_01525">
    <property type="entry name" value="CaiE"/>
    <property type="match status" value="1"/>
</dbReference>
<dbReference type="InterPro" id="IPR023446">
    <property type="entry name" value="CaiE"/>
</dbReference>
<dbReference type="InterPro" id="IPR001451">
    <property type="entry name" value="Hexapep"/>
</dbReference>
<dbReference type="InterPro" id="IPR050484">
    <property type="entry name" value="Transf_Hexapept/Carb_Anhydrase"/>
</dbReference>
<dbReference type="InterPro" id="IPR011004">
    <property type="entry name" value="Trimer_LpxA-like_sf"/>
</dbReference>
<dbReference type="NCBIfam" id="NF010150">
    <property type="entry name" value="PRK13627.1"/>
    <property type="match status" value="1"/>
</dbReference>
<dbReference type="PANTHER" id="PTHR13061">
    <property type="entry name" value="DYNACTIN SUBUNIT P25"/>
    <property type="match status" value="1"/>
</dbReference>
<dbReference type="PANTHER" id="PTHR13061:SF29">
    <property type="entry name" value="GAMMA CARBONIC ANHYDRASE-LIKE 1, MITOCHONDRIAL-RELATED"/>
    <property type="match status" value="1"/>
</dbReference>
<dbReference type="Pfam" id="PF00132">
    <property type="entry name" value="Hexapep"/>
    <property type="match status" value="1"/>
</dbReference>
<dbReference type="SUPFAM" id="SSF51161">
    <property type="entry name" value="Trimeric LpxA-like enzymes"/>
    <property type="match status" value="1"/>
</dbReference>
<organism>
    <name type="scientific">Escherichia coli (strain K12 / DH10B)</name>
    <dbReference type="NCBI Taxonomy" id="316385"/>
    <lineage>
        <taxon>Bacteria</taxon>
        <taxon>Pseudomonadati</taxon>
        <taxon>Pseudomonadota</taxon>
        <taxon>Gammaproteobacteria</taxon>
        <taxon>Enterobacterales</taxon>
        <taxon>Enterobacteriaceae</taxon>
        <taxon>Escherichia</taxon>
    </lineage>
</organism>
<comment type="function">
    <text evidence="1">Overproduction of CaiE stimulates the activity of CaiB and CaiD.</text>
</comment>
<comment type="pathway">
    <text evidence="1">Amine and polyamine metabolism; carnitine metabolism.</text>
</comment>
<comment type="similarity">
    <text evidence="1">Belongs to the transferase hexapeptide repeat family.</text>
</comment>
<proteinExistence type="inferred from homology"/>
<keyword id="KW-0677">Repeat</keyword>
<keyword id="KW-0808">Transferase</keyword>
<reference key="1">
    <citation type="journal article" date="2008" name="J. Bacteriol.">
        <title>The complete genome sequence of Escherichia coli DH10B: insights into the biology of a laboratory workhorse.</title>
        <authorList>
            <person name="Durfee T."/>
            <person name="Nelson R."/>
            <person name="Baldwin S."/>
            <person name="Plunkett G. III"/>
            <person name="Burland V."/>
            <person name="Mau B."/>
            <person name="Petrosino J.F."/>
            <person name="Qin X."/>
            <person name="Muzny D.M."/>
            <person name="Ayele M."/>
            <person name="Gibbs R.A."/>
            <person name="Csorgo B."/>
            <person name="Posfai G."/>
            <person name="Weinstock G.M."/>
            <person name="Blattner F.R."/>
        </authorList>
    </citation>
    <scope>NUCLEOTIDE SEQUENCE [LARGE SCALE GENOMIC DNA]</scope>
    <source>
        <strain>K12 / DH10B</strain>
    </source>
</reference>
<gene>
    <name evidence="1" type="primary">caiE</name>
    <name type="ordered locus">ECDH10B_0036</name>
</gene>
<feature type="chain" id="PRO_1000200922" description="Carnitine operon protein CaiE">
    <location>
        <begin position="1"/>
        <end position="196"/>
    </location>
</feature>
<feature type="region of interest" description="Disordered" evidence="2">
    <location>
        <begin position="174"/>
        <end position="196"/>
    </location>
</feature>
<feature type="compositionally biased region" description="Polar residues" evidence="2">
    <location>
        <begin position="187"/>
        <end position="196"/>
    </location>
</feature>
<sequence>MSYYAFEGLIPVVHPTAFVHPSAVLIGDVIVGAGVYIGPLASLRGDYGRLIVQAGANIQDGCIMHGYCDTDTIVGENGHIGHGAILHGCLIGRDALVGMNSVIMDGAVIGEESIVAAMSFVKAGFRGEKRQLLMGTPARAVRNVSDDELHWKRLNTKEYQDLVGRCHVSLHETQPLRQMEENRPRLQGTTDVTPKR</sequence>
<evidence type="ECO:0000255" key="1">
    <source>
        <dbReference type="HAMAP-Rule" id="MF_01525"/>
    </source>
</evidence>
<evidence type="ECO:0000256" key="2">
    <source>
        <dbReference type="SAM" id="MobiDB-lite"/>
    </source>
</evidence>